<evidence type="ECO:0000250" key="1"/>
<evidence type="ECO:0000250" key="2">
    <source>
        <dbReference type="UniProtKB" id="C7BKP9"/>
    </source>
</evidence>
<evidence type="ECO:0000250" key="3">
    <source>
        <dbReference type="UniProtKB" id="Q38802"/>
    </source>
</evidence>
<evidence type="ECO:0000255" key="4"/>
<evidence type="ECO:0000269" key="5">
    <source>
    </source>
</evidence>
<evidence type="ECO:0000303" key="6">
    <source>
    </source>
</evidence>
<evidence type="ECO:0000305" key="7"/>
<evidence type="ECO:0000305" key="8">
    <source>
    </source>
</evidence>
<name>CLDS_TOBAC</name>
<accession>G3CCC0</accession>
<reference key="1">
    <citation type="journal article" date="2012" name="Plant J.">
        <title>Characterization of two genes for the biosynthesis of the labdane diterpene Z-abienol in tobacco (Nicotiana tabacum) glandular trichomes.</title>
        <authorList>
            <person name="Sallaud C."/>
            <person name="Giacalone C."/>
            <person name="Toepfer R."/>
            <person name="Goepfert S."/>
            <person name="Bakaher N."/>
            <person name="Roesti S."/>
            <person name="Tissier A."/>
        </authorList>
    </citation>
    <scope>NUCLEOTIDE SEQUENCE [MRNA]</scope>
    <scope>FUNCTION</scope>
    <scope>CATALYTIC ACTIVITY</scope>
    <scope>TISSUE SPECIFICITY</scope>
    <scope>PATHWAY</scope>
</reference>
<reference key="2">
    <citation type="journal article" date="2019" name="Nat. Prod. Rep.">
        <title>Non-volatile natural products in plant glandular trichomes: chemistry, biological activities and biosynthesis.</title>
        <authorList>
            <person name="Liu Y."/>
            <person name="Jing S.-X."/>
            <person name="Luo S.-H."/>
            <person name="Li S.-H."/>
        </authorList>
    </citation>
    <scope>PATHWAY</scope>
    <scope>REVIEW</scope>
</reference>
<gene>
    <name evidence="6" type="primary">CPS2</name>
</gene>
<keyword id="KW-0150">Chloroplast</keyword>
<keyword id="KW-0456">Lyase</keyword>
<keyword id="KW-0460">Magnesium</keyword>
<keyword id="KW-0479">Metal-binding</keyword>
<keyword id="KW-0934">Plastid</keyword>
<keyword id="KW-1185">Reference proteome</keyword>
<keyword id="KW-0809">Transit peptide</keyword>
<proteinExistence type="evidence at protein level"/>
<protein>
    <recommendedName>
        <fullName evidence="6">Copal-8-ol diphosphate hydratase, chloroplastic</fullName>
        <ecNumber evidence="5">4.2.1.133</ecNumber>
    </recommendedName>
    <alternativeName>
        <fullName evidence="6">8-hydroxy-copalyl diphosphate synthase</fullName>
    </alternativeName>
</protein>
<sequence length="802" mass="93245">MQVIITSSHRFFCHHLHQLKSPTSLSAQKAEFKKHGPRNWLFQTEGSLLYKPVRLNCATSDASYLGNVNEYLESDHSKNSEEKDIQVSRTIQMKGLTEEIKHMLNSMEDGRLNVLAYDTAWVSFIPNTTNNGNDQRPMFPSCLQWIIDNQLSDGSWGEEIVFCIYDRLLNTLVCVIALTLWNTCLHKRNKGVMFIKENLSKLETGEVENMTSGFELVFPTLLEKAQQLDIDIPYDAPVLKDIYARREVKLTRIPKDVIHTIPTTVLFSLEGLRDDLDWQRLLKLQMPDGSFLISPASTAFAFMETNDEKCLAYLQNVVEKSNGGARQYPFDLVTRLWAIDRLQRLGISYYFAEEFKELLNHVFRYWDEENGIFSGRNSNVSDVDDTCMAIRLLRLHGYDVSPDALNNFKDGDQFVCFRGEVDGSPTHMFNLYRCSQVLFPGEKILEEAKNFTYNFLQQCLANNRCLDKWVIAKDIPGEIWYALEFPWYASLPRVEARYYIEQYGGADDIWIGKTLYRMPDVNNNVYLQAAKLDYNRCQSQHRFEWLIMQEWFEKCNFQQFGISKKYLLVSYFLAAASIFEVEKSRERLAWAKSRIICKMITSYYNDEATTWTTRNSLLMEFKVSHDPTRKNGNETKEILVLKNLRQFLRQLSEETFEDLGKDIHHQLQNAWETWLVFLREEKNACQEETELLVRTINLSGGYMTHDEILFDADYENLSNLTNKVCGKLNELQNDKVTGGSKNTNIELDMQALVKLVFGNTSSNINQDIKQTFFAVVKTFYYSAHVSEEIMNFHISKVLFQQV</sequence>
<organism>
    <name type="scientific">Nicotiana tabacum</name>
    <name type="common">Common tobacco</name>
    <dbReference type="NCBI Taxonomy" id="4097"/>
    <lineage>
        <taxon>Eukaryota</taxon>
        <taxon>Viridiplantae</taxon>
        <taxon>Streptophyta</taxon>
        <taxon>Embryophyta</taxon>
        <taxon>Tracheophyta</taxon>
        <taxon>Spermatophyta</taxon>
        <taxon>Magnoliopsida</taxon>
        <taxon>eudicotyledons</taxon>
        <taxon>Gunneridae</taxon>
        <taxon>Pentapetalae</taxon>
        <taxon>asterids</taxon>
        <taxon>lamiids</taxon>
        <taxon>Solanales</taxon>
        <taxon>Solanaceae</taxon>
        <taxon>Nicotianoideae</taxon>
        <taxon>Nicotianeae</taxon>
        <taxon>Nicotiana</taxon>
    </lineage>
</organism>
<dbReference type="EC" id="4.2.1.133" evidence="5"/>
<dbReference type="EMBL" id="HE588139">
    <property type="protein sequence ID" value="CCD33018.1"/>
    <property type="molecule type" value="Genomic_DNA"/>
</dbReference>
<dbReference type="SMR" id="G3CCC0"/>
<dbReference type="STRING" id="4097.G3CCC0"/>
<dbReference type="PaxDb" id="4097-G3CCC0"/>
<dbReference type="BioCyc" id="MetaCyc:MONOMER18C3-47"/>
<dbReference type="BRENDA" id="4.2.1.133">
    <property type="organism ID" value="3645"/>
</dbReference>
<dbReference type="UniPathway" id="UPA00213"/>
<dbReference type="Proteomes" id="UP000084051">
    <property type="component" value="Unplaced"/>
</dbReference>
<dbReference type="GO" id="GO:0009507">
    <property type="term" value="C:chloroplast"/>
    <property type="evidence" value="ECO:0000318"/>
    <property type="project" value="GO_Central"/>
</dbReference>
<dbReference type="GO" id="GO:0102161">
    <property type="term" value="F:copal-8-ol diphosphate synthase activity"/>
    <property type="evidence" value="ECO:0007669"/>
    <property type="project" value="UniProtKB-EC"/>
</dbReference>
<dbReference type="GO" id="GO:0016836">
    <property type="term" value="F:hydro-lyase activity"/>
    <property type="evidence" value="ECO:0000314"/>
    <property type="project" value="UniProtKB"/>
</dbReference>
<dbReference type="GO" id="GO:0000287">
    <property type="term" value="F:magnesium ion binding"/>
    <property type="evidence" value="ECO:0000318"/>
    <property type="project" value="GO_Central"/>
</dbReference>
<dbReference type="GO" id="GO:0010333">
    <property type="term" value="F:terpene synthase activity"/>
    <property type="evidence" value="ECO:0000314"/>
    <property type="project" value="UniProtKB"/>
</dbReference>
<dbReference type="GO" id="GO:1902243">
    <property type="term" value="P:copal-8-ol diphosphate(3-) biosynthetic process"/>
    <property type="evidence" value="ECO:0000314"/>
    <property type="project" value="UniProtKB"/>
</dbReference>
<dbReference type="GO" id="GO:1902247">
    <property type="term" value="P:geranylgeranyl diphosphate catabolic process"/>
    <property type="evidence" value="ECO:0000314"/>
    <property type="project" value="UniProtKB"/>
</dbReference>
<dbReference type="GO" id="GO:0009686">
    <property type="term" value="P:gibberellin biosynthetic process"/>
    <property type="evidence" value="ECO:0000318"/>
    <property type="project" value="GO_Central"/>
</dbReference>
<dbReference type="FunFam" id="1.50.10.130:FF:000002">
    <property type="entry name" value="Ent-copalyl diphosphate synthase, chloroplastic"/>
    <property type="match status" value="1"/>
</dbReference>
<dbReference type="Gene3D" id="1.50.10.160">
    <property type="match status" value="1"/>
</dbReference>
<dbReference type="Gene3D" id="1.10.600.10">
    <property type="entry name" value="Farnesyl Diphosphate Synthase"/>
    <property type="match status" value="1"/>
</dbReference>
<dbReference type="Gene3D" id="1.50.10.130">
    <property type="entry name" value="Terpene synthase, N-terminal domain"/>
    <property type="match status" value="1"/>
</dbReference>
<dbReference type="InterPro" id="IPR008949">
    <property type="entry name" value="Isoprenoid_synthase_dom_sf"/>
</dbReference>
<dbReference type="InterPro" id="IPR001906">
    <property type="entry name" value="Terpene_synth_N"/>
</dbReference>
<dbReference type="InterPro" id="IPR036965">
    <property type="entry name" value="Terpene_synth_N_sf"/>
</dbReference>
<dbReference type="InterPro" id="IPR050148">
    <property type="entry name" value="Terpene_synthase-like"/>
</dbReference>
<dbReference type="InterPro" id="IPR008930">
    <property type="entry name" value="Terpenoid_cyclase/PrenylTrfase"/>
</dbReference>
<dbReference type="PANTHER" id="PTHR31739:SF30">
    <property type="entry name" value="COPAL-8-OL DIPHOSPHATE HYDRATASE, CHLOROPLASTIC"/>
    <property type="match status" value="1"/>
</dbReference>
<dbReference type="PANTHER" id="PTHR31739">
    <property type="entry name" value="ENT-COPALYL DIPHOSPHATE SYNTHASE, CHLOROPLASTIC"/>
    <property type="match status" value="1"/>
</dbReference>
<dbReference type="Pfam" id="PF01397">
    <property type="entry name" value="Terpene_synth"/>
    <property type="match status" value="1"/>
</dbReference>
<dbReference type="SFLD" id="SFLDG01014">
    <property type="entry name" value="Terpene_Cyclase_Like_1_N-term"/>
    <property type="match status" value="1"/>
</dbReference>
<dbReference type="SFLD" id="SFLDG01605">
    <property type="entry name" value="Terpene_Cyclase_Like_1_N-term"/>
    <property type="match status" value="1"/>
</dbReference>
<dbReference type="SUPFAM" id="SSF48239">
    <property type="entry name" value="Terpenoid cyclases/Protein prenyltransferases"/>
    <property type="match status" value="2"/>
</dbReference>
<dbReference type="SUPFAM" id="SSF48576">
    <property type="entry name" value="Terpenoid synthases"/>
    <property type="match status" value="1"/>
</dbReference>
<comment type="function">
    <text evidence="5">Class-II terpene synthase that synthesizes 8-hydroxy-copalyl diphosphate. Involved in the biosynthesis of cis-abienol, a labdane diterpene that can be used as synthesis precursor of ambergris substitution fragance products.</text>
</comment>
<comment type="catalytic activity">
    <reaction evidence="5">
        <text>(2E,6E,10E)-geranylgeranyl diphosphate + H2O = 8-hydroxycopalyl diphosphate</text>
        <dbReference type="Rhea" id="RHEA:32703"/>
        <dbReference type="ChEBI" id="CHEBI:15377"/>
        <dbReference type="ChEBI" id="CHEBI:58756"/>
        <dbReference type="ChEBI" id="CHEBI:64283"/>
        <dbReference type="EC" id="4.2.1.133"/>
    </reaction>
</comment>
<comment type="cofactor">
    <cofactor evidence="7">
        <name>Mg(2+)</name>
        <dbReference type="ChEBI" id="CHEBI:18420"/>
    </cofactor>
</comment>
<comment type="pathway">
    <text evidence="5">Secondary metabolite biosynthesis; terpenoid biosynthesis.</text>
</comment>
<comment type="subcellular location">
    <subcellularLocation>
        <location evidence="1">Plastid</location>
        <location evidence="1">Chloroplast</location>
    </subcellularLocation>
</comment>
<comment type="tissue specificity">
    <text evidence="5">Expressed specifically in the secretory cells of the glandular trichomes.</text>
</comment>
<comment type="domain">
    <text evidence="1">The Asp-Xaa-Asp-Asp (DXDD) motif is important for the catalytic activity, presumably through binding to Mg(2+).</text>
</comment>
<comment type="miscellaneous">
    <text evidence="8">The expression of both CPS2 and ABS is necessary and sufficient to catalyze the biosynthesis of cis-abienol from geranylgeranyl diphosphate in a heterologous system.</text>
</comment>
<comment type="similarity">
    <text evidence="7">Belongs to the terpene synthase family.</text>
</comment>
<feature type="transit peptide" description="Chloroplast" evidence="4">
    <location>
        <begin position="1"/>
        <end position="24"/>
    </location>
</feature>
<feature type="chain" id="PRO_5000793116" description="Copal-8-ol diphosphate hydratase, chloroplastic">
    <location>
        <begin position="25"/>
        <end position="802"/>
    </location>
</feature>
<feature type="short sequence motif" description="DXDD motif">
    <location>
        <begin position="382"/>
        <end position="385"/>
    </location>
</feature>
<feature type="binding site" evidence="3">
    <location>
        <position position="249"/>
    </location>
    <ligand>
        <name>substrate</name>
    </ligand>
</feature>
<feature type="binding site" evidence="2">
    <location>
        <position position="382"/>
    </location>
    <ligand>
        <name>Mg(2+)</name>
        <dbReference type="ChEBI" id="CHEBI:18420"/>
    </ligand>
</feature>
<feature type="binding site" evidence="2">
    <location>
        <position position="384"/>
    </location>
    <ligand>
        <name>Mg(2+)</name>
        <dbReference type="ChEBI" id="CHEBI:18420"/>
    </ligand>
</feature>
<feature type="binding site" evidence="3">
    <location>
        <position position="468"/>
    </location>
    <ligand>
        <name>substrate</name>
    </ligand>
</feature>